<evidence type="ECO:0000250" key="1">
    <source>
        <dbReference type="UniProtKB" id="O75436"/>
    </source>
</evidence>
<evidence type="ECO:0000250" key="2">
    <source>
        <dbReference type="UniProtKB" id="P40336"/>
    </source>
</evidence>
<evidence type="ECO:0000305" key="3"/>
<organism>
    <name type="scientific">Xenopus tropicalis</name>
    <name type="common">Western clawed frog</name>
    <name type="synonym">Silurana tropicalis</name>
    <dbReference type="NCBI Taxonomy" id="8364"/>
    <lineage>
        <taxon>Eukaryota</taxon>
        <taxon>Metazoa</taxon>
        <taxon>Chordata</taxon>
        <taxon>Craniata</taxon>
        <taxon>Vertebrata</taxon>
        <taxon>Euteleostomi</taxon>
        <taxon>Amphibia</taxon>
        <taxon>Batrachia</taxon>
        <taxon>Anura</taxon>
        <taxon>Pipoidea</taxon>
        <taxon>Pipidae</taxon>
        <taxon>Xenopodinae</taxon>
        <taxon>Xenopus</taxon>
        <taxon>Silurana</taxon>
    </lineage>
</organism>
<protein>
    <recommendedName>
        <fullName>Vacuolar protein sorting-associated protein 26A</fullName>
    </recommendedName>
    <alternativeName>
        <fullName>Vesicle protein sorting 26A</fullName>
    </alternativeName>
</protein>
<comment type="function">
    <text evidence="1">Acts as a component of the retromer cargo-selective complex (CSC). The CSC is believed to be the core functional component of retromer or respective retromer complex variants acting to prevent missorting of selected transmembrane cargo proteins into the lysosomal degradation pathway. Retromer mediates retrograde transport of cargo proteins from endosomes to the trans-Golgi network (TGN) (By similarity).</text>
</comment>
<comment type="subunit">
    <text evidence="1">Component of the heterotrimeric retromer cargo-selective complex (CSC) which is believed to associate with variable sorting nexins to form functionally distinct retromer complex variants (By similarity).</text>
</comment>
<comment type="subcellular location">
    <subcellularLocation>
        <location evidence="2">Cytoplasm</location>
    </subcellularLocation>
    <subcellularLocation>
        <location evidence="2">Endosome membrane</location>
        <topology evidence="2">Peripheral membrane protein</topology>
    </subcellularLocation>
    <subcellularLocation>
        <location evidence="1">Early endosome</location>
    </subcellularLocation>
    <text evidence="1">Localizes to tubular profiles adjacent to endosomes.</text>
</comment>
<comment type="similarity">
    <text evidence="3">Belongs to the VPS26 family.</text>
</comment>
<feature type="chain" id="PRO_0000247088" description="Vacuolar protein sorting-associated protein 26A">
    <location>
        <begin position="1"/>
        <end position="326"/>
    </location>
</feature>
<keyword id="KW-0963">Cytoplasm</keyword>
<keyword id="KW-0967">Endosome</keyword>
<keyword id="KW-0472">Membrane</keyword>
<keyword id="KW-0653">Protein transport</keyword>
<keyword id="KW-1185">Reference proteome</keyword>
<keyword id="KW-0813">Transport</keyword>
<proteinExistence type="evidence at transcript level"/>
<sequence length="326" mass="38123">MSFLSGFFGPICEIEVVLNDADTRKVSEIKTEEGKVEKHFLFYDGESVAGKVNIVFRQPGKRLEHQGIRIEFVGQIELFNDKSNTHEFVNLVKELALPGELTQSRNYDFEFMQVEKPYESYIGANVRLRYFLKVTIVRRLTDLVKEYDLIVHQLATYPDVNNSIKMEVGIEDCLHIEFEYNKSKYHLKDVIVGKIYFLLVRIKIQHMELQLIKKEITGIGPSTTTETETVAKYEIMDGAPVKGESIPIRLFLAGYDPTPTMRDVNKKFSVRYFLNLVLVDEEDRRYFKQQEIILWRKAPEKIRKRTNFHQRFEPQEPQASAEEPEI</sequence>
<gene>
    <name type="primary">vps26a</name>
    <name type="ORF">TGas130e20.1</name>
</gene>
<accession>Q28HT6</accession>
<accession>Q0VGY4</accession>
<reference key="1">
    <citation type="submission" date="2006-03" db="EMBL/GenBank/DDBJ databases">
        <authorList>
            <consortium name="Sanger Xenopus tropicalis EST/cDNA project"/>
        </authorList>
    </citation>
    <scope>NUCLEOTIDE SEQUENCE [LARGE SCALE MRNA]</scope>
    <source>
        <tissue>Gastrula</tissue>
    </source>
</reference>
<reference key="2">
    <citation type="submission" date="2004-08" db="EMBL/GenBank/DDBJ databases">
        <authorList>
            <consortium name="NIH - Xenopus Gene Collection (XGC) project"/>
        </authorList>
    </citation>
    <scope>NUCLEOTIDE SEQUENCE [LARGE SCALE MRNA]</scope>
    <source>
        <tissue>Embryo</tissue>
    </source>
</reference>
<dbReference type="EMBL" id="CR760746">
    <property type="protein sequence ID" value="CAJ83492.1"/>
    <property type="molecule type" value="mRNA"/>
</dbReference>
<dbReference type="EMBL" id="BC080329">
    <property type="protein sequence ID" value="AAH80329.1"/>
    <property type="molecule type" value="mRNA"/>
</dbReference>
<dbReference type="RefSeq" id="NP_001017171.1">
    <property type="nucleotide sequence ID" value="NM_001017171.3"/>
</dbReference>
<dbReference type="SMR" id="Q28HT6"/>
<dbReference type="FunCoup" id="Q28HT6">
    <property type="interactions" value="3295"/>
</dbReference>
<dbReference type="STRING" id="8364.ENSXETP00000005413"/>
<dbReference type="PaxDb" id="8364-ENSXETP00000019433"/>
<dbReference type="DNASU" id="549925"/>
<dbReference type="GeneID" id="549925"/>
<dbReference type="KEGG" id="xtr:549925"/>
<dbReference type="AGR" id="Xenbase:XB-GENE-944860"/>
<dbReference type="CTD" id="9559"/>
<dbReference type="Xenbase" id="XB-GENE-944860">
    <property type="gene designation" value="vps26a"/>
</dbReference>
<dbReference type="eggNOG" id="KOG3063">
    <property type="taxonomic scope" value="Eukaryota"/>
</dbReference>
<dbReference type="HOGENOM" id="CLU_031077_0_0_1"/>
<dbReference type="InParanoid" id="Q28HT6"/>
<dbReference type="OMA" id="AGKVCIE"/>
<dbReference type="OrthoDB" id="3821113at2759"/>
<dbReference type="PhylomeDB" id="Q28HT6"/>
<dbReference type="TreeFam" id="TF300907"/>
<dbReference type="Reactome" id="R-XTR-3238698">
    <property type="pathway name" value="WNT ligand biogenesis and trafficking"/>
</dbReference>
<dbReference type="Proteomes" id="UP000008143">
    <property type="component" value="Chromosome 7"/>
</dbReference>
<dbReference type="Bgee" id="ENSXETG00000008848">
    <property type="expression patterns" value="Expressed in egg cell and 19 other cell types or tissues"/>
</dbReference>
<dbReference type="ExpressionAtlas" id="Q28HT6">
    <property type="expression patterns" value="baseline"/>
</dbReference>
<dbReference type="GO" id="GO:0005769">
    <property type="term" value="C:early endosome"/>
    <property type="evidence" value="ECO:0007669"/>
    <property type="project" value="UniProtKB-SubCell"/>
</dbReference>
<dbReference type="GO" id="GO:0005768">
    <property type="term" value="C:endosome"/>
    <property type="evidence" value="ECO:0000250"/>
    <property type="project" value="UniProtKB"/>
</dbReference>
<dbReference type="GO" id="GO:0010008">
    <property type="term" value="C:endosome membrane"/>
    <property type="evidence" value="ECO:0007669"/>
    <property type="project" value="UniProtKB-SubCell"/>
</dbReference>
<dbReference type="GO" id="GO:0031982">
    <property type="term" value="C:vesicle"/>
    <property type="evidence" value="ECO:0000250"/>
    <property type="project" value="UniProtKB"/>
</dbReference>
<dbReference type="GO" id="GO:0006886">
    <property type="term" value="P:intracellular protein transport"/>
    <property type="evidence" value="ECO:0007669"/>
    <property type="project" value="InterPro"/>
</dbReference>
<dbReference type="FunFam" id="2.60.40.640:FF:000001">
    <property type="entry name" value="Vacuolar protein sorting-associated protein 26A"/>
    <property type="match status" value="1"/>
</dbReference>
<dbReference type="FunFam" id="2.60.40.640:FF:000002">
    <property type="entry name" value="Vacuolar protein sorting-associated protein 26A"/>
    <property type="match status" value="1"/>
</dbReference>
<dbReference type="Gene3D" id="2.60.40.640">
    <property type="match status" value="2"/>
</dbReference>
<dbReference type="InterPro" id="IPR014752">
    <property type="entry name" value="Arrestin-like_C"/>
</dbReference>
<dbReference type="InterPro" id="IPR028934">
    <property type="entry name" value="Vps26-related"/>
</dbReference>
<dbReference type="PANTHER" id="PTHR12233">
    <property type="entry name" value="VACUOLAR PROTEIN SORTING 26 RELATED"/>
    <property type="match status" value="1"/>
</dbReference>
<dbReference type="Pfam" id="PF03643">
    <property type="entry name" value="Vps26"/>
    <property type="match status" value="1"/>
</dbReference>
<name>VP26A_XENTR</name>